<geneLocation type="chloroplast"/>
<reference key="1">
    <citation type="submission" date="2000-02" db="EMBL/GenBank/DDBJ databases">
        <title>Long branches in the seed plants and the root of the angiosperms.</title>
        <authorList>
            <person name="Graham S.W."/>
            <person name="Reeves P.A."/>
            <person name="Burns A."/>
            <person name="Olmstead R.G."/>
        </authorList>
    </citation>
    <scope>NUCLEOTIDE SEQUENCE [GENOMIC DNA]</scope>
</reference>
<accession>Q7HIW2</accession>
<gene>
    <name evidence="1" type="primary">psbN</name>
</gene>
<keyword id="KW-0150">Chloroplast</keyword>
<keyword id="KW-0472">Membrane</keyword>
<keyword id="KW-0934">Plastid</keyword>
<keyword id="KW-0793">Thylakoid</keyword>
<keyword id="KW-0812">Transmembrane</keyword>
<keyword id="KW-1133">Transmembrane helix</keyword>
<name>PSBN_LILSU</name>
<organism>
    <name type="scientific">Lilium superbum</name>
    <name type="common">Turk's cap lily</name>
    <name type="synonym">Lilium canadense subsp. superbum</name>
    <dbReference type="NCBI Taxonomy" id="4692"/>
    <lineage>
        <taxon>Eukaryota</taxon>
        <taxon>Viridiplantae</taxon>
        <taxon>Streptophyta</taxon>
        <taxon>Embryophyta</taxon>
        <taxon>Tracheophyta</taxon>
        <taxon>Spermatophyta</taxon>
        <taxon>Magnoliopsida</taxon>
        <taxon>Liliopsida</taxon>
        <taxon>Liliales</taxon>
        <taxon>Liliaceae</taxon>
        <taxon>Lilium</taxon>
    </lineage>
</organism>
<comment type="function">
    <text evidence="1">May play a role in photosystem I and II biogenesis.</text>
</comment>
<comment type="subcellular location">
    <subcellularLocation>
        <location evidence="1">Plastid</location>
        <location evidence="1">Chloroplast thylakoid membrane</location>
        <topology evidence="1">Single-pass membrane protein</topology>
    </subcellularLocation>
</comment>
<comment type="similarity">
    <text evidence="1">Belongs to the PsbN family.</text>
</comment>
<comment type="caution">
    <text evidence="1">Originally thought to be a component of PSII; based on experiments in Synechocystis, N.tabacum and barley, and its absence from PSII in T.elongatus and T.vulcanus, this is probably not true.</text>
</comment>
<feature type="chain" id="PRO_0000207915" description="Protein PsbN">
    <location>
        <begin position="1"/>
        <end position="43"/>
    </location>
</feature>
<feature type="transmembrane region" description="Helical" evidence="1">
    <location>
        <begin position="7"/>
        <end position="27"/>
    </location>
</feature>
<protein>
    <recommendedName>
        <fullName evidence="1">Protein PsbN</fullName>
    </recommendedName>
</protein>
<sequence>METATLVAIFISGLLVSFTGYALYTAFGQPSQQLRDPFEEHGD</sequence>
<evidence type="ECO:0000255" key="1">
    <source>
        <dbReference type="HAMAP-Rule" id="MF_00293"/>
    </source>
</evidence>
<dbReference type="EMBL" id="AY007465">
    <property type="protein sequence ID" value="AAG12373.1"/>
    <property type="molecule type" value="Genomic_DNA"/>
</dbReference>
<dbReference type="RefSeq" id="YP_009130241.1">
    <property type="nucleotide sequence ID" value="NC_026787.1"/>
</dbReference>
<dbReference type="SMR" id="Q7HIW2"/>
<dbReference type="GeneID" id="24020138"/>
<dbReference type="GO" id="GO:0009535">
    <property type="term" value="C:chloroplast thylakoid membrane"/>
    <property type="evidence" value="ECO:0007669"/>
    <property type="project" value="UniProtKB-SubCell"/>
</dbReference>
<dbReference type="GO" id="GO:0015979">
    <property type="term" value="P:photosynthesis"/>
    <property type="evidence" value="ECO:0007669"/>
    <property type="project" value="InterPro"/>
</dbReference>
<dbReference type="HAMAP" id="MF_00293">
    <property type="entry name" value="PSII_PsbN"/>
    <property type="match status" value="1"/>
</dbReference>
<dbReference type="InterPro" id="IPR003398">
    <property type="entry name" value="PSII_PsbN"/>
</dbReference>
<dbReference type="PANTHER" id="PTHR35326">
    <property type="entry name" value="PROTEIN PSBN"/>
    <property type="match status" value="1"/>
</dbReference>
<dbReference type="PANTHER" id="PTHR35326:SF3">
    <property type="entry name" value="PROTEIN PSBN"/>
    <property type="match status" value="1"/>
</dbReference>
<dbReference type="Pfam" id="PF02468">
    <property type="entry name" value="PsbN"/>
    <property type="match status" value="1"/>
</dbReference>
<proteinExistence type="inferred from homology"/>